<sequence>MPSTKRYQHVIETPEPGEWELSGYEAAVPITEKSNPLTRNLDKADAEKIVQLLGQCDAEIFQEEGQIMPTYQRLYSESVLTTMLQVAGKVQEVLKEPDGGLVVLSGGGTSGRMAFLMSVSFNQLMKGLGQKPLYTYLIAGGDRSVVASRERTEDSALHGIEELKKVAAGKKRVVVIGISVGLSAPFVAGQMDYCMDNTAVFLPVLVGFNPVSMARNDPIEDWRSTFRQVAERMQKMQEKQEAFVLNPAIGPEGLSGSSRMKGGSATKILLETLLLAAHKTVDQGVVSSQRCLLEILRTFERAHQVTYSQSSKIATLTKQVGISLEKKGHVHLVGWQTLGIIAIMDGVECIHTFGADFRDIRGFLIGDHNDMFNQKDELSNQGPQFTFSQDDFLTSVLPSLTEIDTVVFIFTLDDNLAEVQALAERVREKSWNIQALVHSTVGQSLPAPLKKLFPSLISITWPLLFFDYEGSYVQKFQRELSTKWVLNTVSTGAHVLLGKILQNHMLDLRIANSKLFWRALAMLQRFSGQSKARCIESLLQVIHFPQPLSNDVRAAPISCHVQVAHEKEKVIPTALLSLLLRCSITEAKERLAAASSVCEVVRSALSGPGQKRSIQAFGDPVVP</sequence>
<gene>
    <name evidence="7" type="primary">Gckr</name>
</gene>
<dbReference type="EMBL" id="AC114619">
    <property type="status" value="NOT_ANNOTATED_CDS"/>
    <property type="molecule type" value="Genomic_DNA"/>
</dbReference>
<dbReference type="EMBL" id="BC012412">
    <property type="protein sequence ID" value="AAH12412.1"/>
    <property type="molecule type" value="mRNA"/>
</dbReference>
<dbReference type="CCDS" id="CCDS19182.1">
    <molecule id="Q91X44-1"/>
</dbReference>
<dbReference type="CCDS" id="CCDS89900.1">
    <molecule id="Q91X44-2"/>
</dbReference>
<dbReference type="RefSeq" id="NP_001361670.1">
    <molecule id="Q91X44-2"/>
    <property type="nucleotide sequence ID" value="NM_001374741.1"/>
</dbReference>
<dbReference type="RefSeq" id="NP_659158.1">
    <molecule id="Q91X44-1"/>
    <property type="nucleotide sequence ID" value="NM_144909.2"/>
</dbReference>
<dbReference type="RefSeq" id="XP_006503944.1">
    <property type="nucleotide sequence ID" value="XM_006503881.3"/>
</dbReference>
<dbReference type="SMR" id="Q91X44"/>
<dbReference type="BioGRID" id="231083">
    <property type="interactions" value="1"/>
</dbReference>
<dbReference type="FunCoup" id="Q91X44">
    <property type="interactions" value="685"/>
</dbReference>
<dbReference type="STRING" id="10090.ENSMUSP00000072084"/>
<dbReference type="BindingDB" id="Q91X44"/>
<dbReference type="ChEMBL" id="CHEMBL3232700"/>
<dbReference type="GlyGen" id="Q91X44">
    <property type="glycosylation" value="1 site, 1 O-linked glycan (1 site)"/>
</dbReference>
<dbReference type="iPTMnet" id="Q91X44"/>
<dbReference type="PhosphoSitePlus" id="Q91X44"/>
<dbReference type="SwissPalm" id="Q91X44"/>
<dbReference type="jPOST" id="Q91X44"/>
<dbReference type="PaxDb" id="10090-ENSMUSP00000072084"/>
<dbReference type="PeptideAtlas" id="Q91X44"/>
<dbReference type="ProteomicsDB" id="268857"/>
<dbReference type="ProteomicsDB" id="343506"/>
<dbReference type="Antibodypedia" id="28588">
    <property type="antibodies" value="379 antibodies from 27 providers"/>
</dbReference>
<dbReference type="DNASU" id="231103"/>
<dbReference type="Ensembl" id="ENSMUST00000072228.9">
    <molecule id="Q91X44-1"/>
    <property type="protein sequence ID" value="ENSMUSP00000072084.6"/>
    <property type="gene ID" value="ENSMUSG00000059434.10"/>
</dbReference>
<dbReference type="Ensembl" id="ENSMUST00000201166.4">
    <molecule id="Q91X44-2"/>
    <property type="protein sequence ID" value="ENSMUSP00000144202.2"/>
    <property type="gene ID" value="ENSMUSG00000059434.10"/>
</dbReference>
<dbReference type="GeneID" id="231103"/>
<dbReference type="KEGG" id="mmu:231103"/>
<dbReference type="UCSC" id="uc008wyf.1">
    <molecule id="Q91X44-2"/>
    <property type="organism name" value="mouse"/>
</dbReference>
<dbReference type="AGR" id="MGI:1096345"/>
<dbReference type="CTD" id="2646"/>
<dbReference type="MGI" id="MGI:1096345">
    <property type="gene designation" value="Gckr"/>
</dbReference>
<dbReference type="VEuPathDB" id="HostDB:ENSMUSG00000059434"/>
<dbReference type="eggNOG" id="ENOG502QS2J">
    <property type="taxonomic scope" value="Eukaryota"/>
</dbReference>
<dbReference type="GeneTree" id="ENSGT00390000005345"/>
<dbReference type="InParanoid" id="Q91X44"/>
<dbReference type="OMA" id="WESADYE"/>
<dbReference type="OrthoDB" id="311172at2759"/>
<dbReference type="PhylomeDB" id="Q91X44"/>
<dbReference type="TreeFam" id="TF329177"/>
<dbReference type="Reactome" id="R-MMU-170822">
    <property type="pathway name" value="Regulation of Glucokinase by Glucokinase Regulatory Protein"/>
</dbReference>
<dbReference type="BioGRID-ORCS" id="231103">
    <property type="hits" value="1 hit in 78 CRISPR screens"/>
</dbReference>
<dbReference type="PRO" id="PR:Q91X44"/>
<dbReference type="Proteomes" id="UP000000589">
    <property type="component" value="Chromosome 5"/>
</dbReference>
<dbReference type="RNAct" id="Q91X44">
    <property type="molecule type" value="protein"/>
</dbReference>
<dbReference type="Bgee" id="ENSMUSG00000059434">
    <property type="expression patterns" value="Expressed in left lobe of liver and 47 other cell types or tissues"/>
</dbReference>
<dbReference type="ExpressionAtlas" id="Q91X44">
    <property type="expression patterns" value="baseline and differential"/>
</dbReference>
<dbReference type="GO" id="GO:0005737">
    <property type="term" value="C:cytoplasm"/>
    <property type="evidence" value="ECO:0000250"/>
    <property type="project" value="UniProtKB"/>
</dbReference>
<dbReference type="GO" id="GO:0005829">
    <property type="term" value="C:cytosol"/>
    <property type="evidence" value="ECO:0007669"/>
    <property type="project" value="Ensembl"/>
</dbReference>
<dbReference type="GO" id="GO:0005739">
    <property type="term" value="C:mitochondrion"/>
    <property type="evidence" value="ECO:0007669"/>
    <property type="project" value="UniProtKB-SubCell"/>
</dbReference>
<dbReference type="GO" id="GO:0005654">
    <property type="term" value="C:nucleoplasm"/>
    <property type="evidence" value="ECO:0000250"/>
    <property type="project" value="UniProtKB"/>
</dbReference>
<dbReference type="GO" id="GO:0005634">
    <property type="term" value="C:nucleus"/>
    <property type="evidence" value="ECO:0000314"/>
    <property type="project" value="BHF-UCL"/>
</dbReference>
<dbReference type="GO" id="GO:0030246">
    <property type="term" value="F:carbohydrate binding"/>
    <property type="evidence" value="ECO:0007669"/>
    <property type="project" value="Ensembl"/>
</dbReference>
<dbReference type="GO" id="GO:0070095">
    <property type="term" value="F:fructose-6-phosphate binding"/>
    <property type="evidence" value="ECO:0000250"/>
    <property type="project" value="UniProtKB"/>
</dbReference>
<dbReference type="GO" id="GO:0141089">
    <property type="term" value="F:glucose sensor activity"/>
    <property type="evidence" value="ECO:0007669"/>
    <property type="project" value="Ensembl"/>
</dbReference>
<dbReference type="GO" id="GO:0019900">
    <property type="term" value="F:kinase binding"/>
    <property type="evidence" value="ECO:0007669"/>
    <property type="project" value="Ensembl"/>
</dbReference>
<dbReference type="GO" id="GO:0019210">
    <property type="term" value="F:kinase inhibitor activity"/>
    <property type="evidence" value="ECO:0000315"/>
    <property type="project" value="BHF-UCL"/>
</dbReference>
<dbReference type="GO" id="GO:0019904">
    <property type="term" value="F:protein domain specific binding"/>
    <property type="evidence" value="ECO:0007669"/>
    <property type="project" value="Ensembl"/>
</dbReference>
<dbReference type="GO" id="GO:1901135">
    <property type="term" value="P:carbohydrate derivative metabolic process"/>
    <property type="evidence" value="ECO:0007669"/>
    <property type="project" value="InterPro"/>
</dbReference>
<dbReference type="GO" id="GO:0001678">
    <property type="term" value="P:intracellular glucose homeostasis"/>
    <property type="evidence" value="ECO:0000315"/>
    <property type="project" value="MGI"/>
</dbReference>
<dbReference type="GO" id="GO:0033132">
    <property type="term" value="P:negative regulation of glucokinase activity"/>
    <property type="evidence" value="ECO:0000250"/>
    <property type="project" value="UniProtKB"/>
</dbReference>
<dbReference type="GO" id="GO:0006606">
    <property type="term" value="P:protein import into nucleus"/>
    <property type="evidence" value="ECO:0000315"/>
    <property type="project" value="MGI"/>
</dbReference>
<dbReference type="GO" id="GO:0034504">
    <property type="term" value="P:protein localization to nucleus"/>
    <property type="evidence" value="ECO:0000315"/>
    <property type="project" value="MGI"/>
</dbReference>
<dbReference type="GO" id="GO:0009750">
    <property type="term" value="P:response to fructose"/>
    <property type="evidence" value="ECO:0007669"/>
    <property type="project" value="Ensembl"/>
</dbReference>
<dbReference type="GO" id="GO:0009749">
    <property type="term" value="P:response to glucose"/>
    <property type="evidence" value="ECO:0007669"/>
    <property type="project" value="Ensembl"/>
</dbReference>
<dbReference type="FunFam" id="1.10.8.1080:FF:000002">
    <property type="entry name" value="Glucokinase regulatory protein"/>
    <property type="match status" value="1"/>
</dbReference>
<dbReference type="FunFam" id="3.40.50.10490:FF:000033">
    <property type="entry name" value="Glucokinase regulatory protein"/>
    <property type="match status" value="1"/>
</dbReference>
<dbReference type="FunFam" id="3.40.50.12620:FF:000001">
    <property type="entry name" value="Glucokinase regulatory protein"/>
    <property type="match status" value="1"/>
</dbReference>
<dbReference type="Gene3D" id="1.10.8.1080">
    <property type="match status" value="1"/>
</dbReference>
<dbReference type="Gene3D" id="3.40.50.12620">
    <property type="match status" value="1"/>
</dbReference>
<dbReference type="Gene3D" id="3.40.50.10490">
    <property type="entry name" value="Glucose-6-phosphate isomerase like protein, domain 1"/>
    <property type="match status" value="1"/>
</dbReference>
<dbReference type="InterPro" id="IPR054017">
    <property type="entry name" value="GKRP_SIS_2"/>
</dbReference>
<dbReference type="InterPro" id="IPR005486">
    <property type="entry name" value="Glucokinase_regulatory_CS"/>
</dbReference>
<dbReference type="InterPro" id="IPR040190">
    <property type="entry name" value="MURQ/GCKR"/>
</dbReference>
<dbReference type="InterPro" id="IPR001347">
    <property type="entry name" value="SIS_dom"/>
</dbReference>
<dbReference type="InterPro" id="IPR046348">
    <property type="entry name" value="SIS_dom_sf"/>
</dbReference>
<dbReference type="PANTHER" id="PTHR10088">
    <property type="entry name" value="GLUCOKINASE REGULATORY PROTEIN"/>
    <property type="match status" value="1"/>
</dbReference>
<dbReference type="PANTHER" id="PTHR10088:SF4">
    <property type="entry name" value="GLUCOKINASE REGULATORY PROTEIN"/>
    <property type="match status" value="1"/>
</dbReference>
<dbReference type="Pfam" id="PF20741">
    <property type="entry name" value="GKRP-like_C"/>
    <property type="match status" value="1"/>
</dbReference>
<dbReference type="Pfam" id="PF22198">
    <property type="entry name" value="GKRP_SIS_2"/>
    <property type="match status" value="1"/>
</dbReference>
<dbReference type="Pfam" id="PF22645">
    <property type="entry name" value="GKRP_SIS_N"/>
    <property type="match status" value="1"/>
</dbReference>
<dbReference type="SUPFAM" id="SSF53697">
    <property type="entry name" value="SIS domain"/>
    <property type="match status" value="2"/>
</dbReference>
<dbReference type="PROSITE" id="PS01272">
    <property type="entry name" value="GCKR"/>
    <property type="match status" value="1"/>
</dbReference>
<dbReference type="PROSITE" id="PS51464">
    <property type="entry name" value="SIS"/>
    <property type="match status" value="2"/>
</dbReference>
<comment type="function">
    <text evidence="2 4">Regulates glucokinase (GCK) by forming an inactive complex with this enzyme (PubMed:10713097). Acts by promoting GCK recruitment to the nucleus, possibly to provide a reserve of GCK that can be quickly released in the cytoplasm after a meal (PubMed:10713097). The affinity of GCKR for GCK is modulated by fructose metabolites: GCKR with bound fructose 6-phosphate has increased affinity for GCK, while GCKR with bound fructose 1-phosphate has strongly decreased affinity for GCK and does not inhibit GCK activity (By similarity).</text>
</comment>
<comment type="subunit">
    <text evidence="4">Interacts (fructose 6-phosphate bound form) with GCK.</text>
</comment>
<comment type="subcellular location">
    <subcellularLocation>
        <location evidence="2">Cytoplasm</location>
    </subcellularLocation>
    <subcellularLocation>
        <location evidence="4">Nucleus</location>
    </subcellularLocation>
    <subcellularLocation>
        <location evidence="1">Mitochondrion</location>
    </subcellularLocation>
    <text evidence="2">Under low glucose concentrations, GCKR associates with GCK and the inactive complex is recruited to the hepatocyte nucleus.</text>
</comment>
<comment type="alternative products">
    <event type="alternative splicing"/>
    <isoform>
        <id>Q91X44-2</id>
        <name>2</name>
        <sequence type="displayed"/>
    </isoform>
    <isoform>
        <id>Q91X44-1</id>
        <name>1</name>
        <sequence type="described" ref="VSP_061733"/>
    </isoform>
</comment>
<comment type="domain">
    <text evidence="2">Fructose 1-phosphate and fructose 6-phosphate compete for the same binding site.</text>
</comment>
<comment type="disruption phenotype">
    <text evidence="4">Mice appear normal and are fertile (PubMed:10713097). Their body weights do not differ significantly from the body weights of wild-type animals up to 60 weeks of age (PubMed:10713097). Mice however show a substantial decrease in hepatic glucokinase (Gck) expression and enzymatic activity, with no change in basal blood glucose levels (PubMed:10713097). However, following a glucose tolerance test, mice show impaired glucose clearance, possibly because they cannot recruit sufficient glucokinase due to the absence of a nuclear reserve (PubMed:10713097).</text>
</comment>
<comment type="similarity">
    <text evidence="6">Belongs to the GCKR family.</text>
</comment>
<evidence type="ECO:0000250" key="1">
    <source>
        <dbReference type="UniProtKB" id="Q07071"/>
    </source>
</evidence>
<evidence type="ECO:0000250" key="2">
    <source>
        <dbReference type="UniProtKB" id="Q14397"/>
    </source>
</evidence>
<evidence type="ECO:0000255" key="3">
    <source>
        <dbReference type="PROSITE-ProRule" id="PRU00797"/>
    </source>
</evidence>
<evidence type="ECO:0000269" key="4">
    <source>
    </source>
</evidence>
<evidence type="ECO:0000303" key="5">
    <source>
    </source>
</evidence>
<evidence type="ECO:0000305" key="6"/>
<evidence type="ECO:0000312" key="7">
    <source>
        <dbReference type="MGI" id="MGI:1096345"/>
    </source>
</evidence>
<proteinExistence type="evidence at protein level"/>
<accession>Q91X44</accession>
<accession>A0A0J9YUI8</accession>
<feature type="chain" id="PRO_0000248832" description="Glucokinase regulatory protein">
    <location>
        <begin position="1"/>
        <end position="623"/>
    </location>
</feature>
<feature type="domain" description="SIS 1" evidence="3">
    <location>
        <begin position="90"/>
        <end position="286"/>
    </location>
</feature>
<feature type="domain" description="SIS 2" evidence="3">
    <location>
        <begin position="320"/>
        <end position="476"/>
    </location>
</feature>
<feature type="region of interest" description="Important for interaction with GCK" evidence="1">
    <location>
        <begin position="199"/>
        <end position="200"/>
    </location>
</feature>
<feature type="region of interest" description="Essential for interaction with GCK" evidence="2">
    <location>
        <begin position="463"/>
        <end position="465"/>
    </location>
</feature>
<feature type="binding site" evidence="2">
    <location>
        <begin position="109"/>
        <end position="110"/>
    </location>
    <ligand>
        <name>beta-D-fructose 1-phosphate</name>
        <dbReference type="ChEBI" id="CHEBI:138881"/>
    </ligand>
</feature>
<feature type="binding site" evidence="1">
    <location>
        <begin position="109"/>
        <end position="110"/>
    </location>
    <ligand>
        <name>beta-D-fructose 6-phosphate</name>
        <dbReference type="ChEBI" id="CHEBI:57634"/>
    </ligand>
</feature>
<feature type="binding site" evidence="2">
    <location>
        <position position="153"/>
    </location>
    <ligand>
        <name>beta-D-fructose 1-phosphate</name>
        <dbReference type="ChEBI" id="CHEBI:138881"/>
    </ligand>
</feature>
<feature type="binding site" evidence="2">
    <location>
        <begin position="179"/>
        <end position="181"/>
    </location>
    <ligand>
        <name>beta-D-fructose 1-phosphate</name>
        <dbReference type="ChEBI" id="CHEBI:138881"/>
    </ligand>
</feature>
<feature type="binding site" evidence="1">
    <location>
        <begin position="179"/>
        <end position="181"/>
    </location>
    <ligand>
        <name>beta-D-fructose 6-phosphate</name>
        <dbReference type="ChEBI" id="CHEBI:57634"/>
    </ligand>
</feature>
<feature type="binding site" evidence="2">
    <location>
        <position position="348"/>
    </location>
    <ligand>
        <name>beta-D-fructose 1-phosphate</name>
        <dbReference type="ChEBI" id="CHEBI:138881"/>
    </ligand>
</feature>
<feature type="splice variant" id="VSP_061733" description="In isoform 1.">
    <location>
        <begin position="489"/>
        <end position="524"/>
    </location>
</feature>
<protein>
    <recommendedName>
        <fullName evidence="5">Glucokinase regulatory protein</fullName>
        <shortName evidence="5">GKRP</shortName>
        <shortName evidence="2">Glucokinase regulator</shortName>
    </recommendedName>
</protein>
<name>GCKR_MOUSE</name>
<keyword id="KW-0025">Alternative splicing</keyword>
<keyword id="KW-0119">Carbohydrate metabolism</keyword>
<keyword id="KW-0963">Cytoplasm</keyword>
<keyword id="KW-0496">Mitochondrion</keyword>
<keyword id="KW-0539">Nucleus</keyword>
<keyword id="KW-1185">Reference proteome</keyword>
<keyword id="KW-0677">Repeat</keyword>
<reference key="1">
    <citation type="journal article" date="2009" name="PLoS Biol.">
        <title>Lineage-specific biology revealed by a finished genome assembly of the mouse.</title>
        <authorList>
            <person name="Church D.M."/>
            <person name="Goodstadt L."/>
            <person name="Hillier L.W."/>
            <person name="Zody M.C."/>
            <person name="Goldstein S."/>
            <person name="She X."/>
            <person name="Bult C.J."/>
            <person name="Agarwala R."/>
            <person name="Cherry J.L."/>
            <person name="DiCuccio M."/>
            <person name="Hlavina W."/>
            <person name="Kapustin Y."/>
            <person name="Meric P."/>
            <person name="Maglott D."/>
            <person name="Birtle Z."/>
            <person name="Marques A.C."/>
            <person name="Graves T."/>
            <person name="Zhou S."/>
            <person name="Teague B."/>
            <person name="Potamousis K."/>
            <person name="Churas C."/>
            <person name="Place M."/>
            <person name="Herschleb J."/>
            <person name="Runnheim R."/>
            <person name="Forrest D."/>
            <person name="Amos-Landgraf J."/>
            <person name="Schwartz D.C."/>
            <person name="Cheng Z."/>
            <person name="Lindblad-Toh K."/>
            <person name="Eichler E.E."/>
            <person name="Ponting C.P."/>
        </authorList>
    </citation>
    <scope>NUCLEOTIDE SEQUENCE [LARGE SCALE GENOMIC DNA]</scope>
    <source>
        <strain>C57BL/6J</strain>
    </source>
</reference>
<reference key="2">
    <citation type="journal article" date="2004" name="Genome Res.">
        <title>The status, quality, and expansion of the NIH full-length cDNA project: the Mammalian Gene Collection (MGC).</title>
        <authorList>
            <consortium name="The MGC Project Team"/>
        </authorList>
    </citation>
    <scope>NUCLEOTIDE SEQUENCE [LARGE SCALE MRNA] (ISOFORM 1)</scope>
    <source>
        <strain>FVB/N</strain>
        <tissue>Liver</tissue>
    </source>
</reference>
<reference key="3">
    <citation type="journal article" date="2010" name="Cell">
        <title>A tissue-specific atlas of mouse protein phosphorylation and expression.</title>
        <authorList>
            <person name="Huttlin E.L."/>
            <person name="Jedrychowski M.P."/>
            <person name="Elias J.E."/>
            <person name="Goswami T."/>
            <person name="Rad R."/>
            <person name="Beausoleil S.A."/>
            <person name="Villen J."/>
            <person name="Haas W."/>
            <person name="Sowa M.E."/>
            <person name="Gygi S.P."/>
        </authorList>
    </citation>
    <scope>IDENTIFICATION BY MASS SPECTROMETRY [LARGE SCALE ANALYSIS]</scope>
    <source>
        <tissue>Liver</tissue>
    </source>
</reference>
<reference key="4">
    <citation type="journal article" date="2000" name="J. Biol. Chem.">
        <title>Characterization of glucokinase regulatory protein-deficient mice.</title>
        <authorList>
            <person name="Grimsby J."/>
            <person name="Coffey J.W."/>
            <person name="Dvorozniak M.T."/>
            <person name="Magram J."/>
            <person name="Li G."/>
            <person name="Matschinsky F.M."/>
            <person name="Shiota C."/>
            <person name="Kaur S."/>
            <person name="Magnuson M.A."/>
            <person name="Grippo J.F."/>
        </authorList>
    </citation>
    <scope>FUNCTION</scope>
    <scope>SUBCELLULAR LOCATION</scope>
    <scope>INTERACTION WITH GCK</scope>
    <scope>DISRUPTION PHENOTYPE</scope>
</reference>
<organism>
    <name type="scientific">Mus musculus</name>
    <name type="common">Mouse</name>
    <dbReference type="NCBI Taxonomy" id="10090"/>
    <lineage>
        <taxon>Eukaryota</taxon>
        <taxon>Metazoa</taxon>
        <taxon>Chordata</taxon>
        <taxon>Craniata</taxon>
        <taxon>Vertebrata</taxon>
        <taxon>Euteleostomi</taxon>
        <taxon>Mammalia</taxon>
        <taxon>Eutheria</taxon>
        <taxon>Euarchontoglires</taxon>
        <taxon>Glires</taxon>
        <taxon>Rodentia</taxon>
        <taxon>Myomorpha</taxon>
        <taxon>Muroidea</taxon>
        <taxon>Muridae</taxon>
        <taxon>Murinae</taxon>
        <taxon>Mus</taxon>
        <taxon>Mus</taxon>
    </lineage>
</organism>